<feature type="chain" id="PRO_1000200687" description="Exodeoxyribonuclease 7 large subunit">
    <location>
        <begin position="1"/>
        <end position="389"/>
    </location>
</feature>
<gene>
    <name evidence="1" type="primary">xseA</name>
    <name type="ordered locus">Tlet_2015</name>
</gene>
<keyword id="KW-0963">Cytoplasm</keyword>
<keyword id="KW-0269">Exonuclease</keyword>
<keyword id="KW-0378">Hydrolase</keyword>
<keyword id="KW-0540">Nuclease</keyword>
<keyword id="KW-1185">Reference proteome</keyword>
<organism>
    <name type="scientific">Pseudothermotoga lettingae (strain ATCC BAA-301 / DSM 14385 / NBRC 107922 / TMO)</name>
    <name type="common">Thermotoga lettingae</name>
    <dbReference type="NCBI Taxonomy" id="416591"/>
    <lineage>
        <taxon>Bacteria</taxon>
        <taxon>Thermotogati</taxon>
        <taxon>Thermotogota</taxon>
        <taxon>Thermotogae</taxon>
        <taxon>Thermotogales</taxon>
        <taxon>Thermotogaceae</taxon>
        <taxon>Pseudothermotoga</taxon>
    </lineage>
</organism>
<accession>A8F8T5</accession>
<dbReference type="EC" id="3.1.11.6" evidence="1"/>
<dbReference type="EMBL" id="CP000812">
    <property type="protein sequence ID" value="ABV34569.1"/>
    <property type="molecule type" value="Genomic_DNA"/>
</dbReference>
<dbReference type="SMR" id="A8F8T5"/>
<dbReference type="STRING" id="416591.Tlet_2015"/>
<dbReference type="KEGG" id="tle:Tlet_2015"/>
<dbReference type="eggNOG" id="COG1570">
    <property type="taxonomic scope" value="Bacteria"/>
</dbReference>
<dbReference type="HOGENOM" id="CLU_023625_2_0_0"/>
<dbReference type="OrthoDB" id="9802795at2"/>
<dbReference type="Proteomes" id="UP000002016">
    <property type="component" value="Chromosome"/>
</dbReference>
<dbReference type="GO" id="GO:0005737">
    <property type="term" value="C:cytoplasm"/>
    <property type="evidence" value="ECO:0007669"/>
    <property type="project" value="UniProtKB-SubCell"/>
</dbReference>
<dbReference type="GO" id="GO:0009318">
    <property type="term" value="C:exodeoxyribonuclease VII complex"/>
    <property type="evidence" value="ECO:0007669"/>
    <property type="project" value="InterPro"/>
</dbReference>
<dbReference type="GO" id="GO:0008855">
    <property type="term" value="F:exodeoxyribonuclease VII activity"/>
    <property type="evidence" value="ECO:0007669"/>
    <property type="project" value="UniProtKB-UniRule"/>
</dbReference>
<dbReference type="GO" id="GO:0003676">
    <property type="term" value="F:nucleic acid binding"/>
    <property type="evidence" value="ECO:0007669"/>
    <property type="project" value="InterPro"/>
</dbReference>
<dbReference type="GO" id="GO:0006308">
    <property type="term" value="P:DNA catabolic process"/>
    <property type="evidence" value="ECO:0007669"/>
    <property type="project" value="UniProtKB-UniRule"/>
</dbReference>
<dbReference type="CDD" id="cd04489">
    <property type="entry name" value="ExoVII_LU_OBF"/>
    <property type="match status" value="1"/>
</dbReference>
<dbReference type="HAMAP" id="MF_00378">
    <property type="entry name" value="Exonuc_7_L"/>
    <property type="match status" value="1"/>
</dbReference>
<dbReference type="InterPro" id="IPR003753">
    <property type="entry name" value="Exonuc_VII_L"/>
</dbReference>
<dbReference type="InterPro" id="IPR020579">
    <property type="entry name" value="Exonuc_VII_lsu_C"/>
</dbReference>
<dbReference type="InterPro" id="IPR025824">
    <property type="entry name" value="OB-fold_nuc-bd_dom"/>
</dbReference>
<dbReference type="NCBIfam" id="TIGR00237">
    <property type="entry name" value="xseA"/>
    <property type="match status" value="1"/>
</dbReference>
<dbReference type="PANTHER" id="PTHR30008">
    <property type="entry name" value="EXODEOXYRIBONUCLEASE 7 LARGE SUBUNIT"/>
    <property type="match status" value="1"/>
</dbReference>
<dbReference type="PANTHER" id="PTHR30008:SF0">
    <property type="entry name" value="EXODEOXYRIBONUCLEASE 7 LARGE SUBUNIT"/>
    <property type="match status" value="1"/>
</dbReference>
<dbReference type="Pfam" id="PF02601">
    <property type="entry name" value="Exonuc_VII_L"/>
    <property type="match status" value="2"/>
</dbReference>
<dbReference type="Pfam" id="PF13742">
    <property type="entry name" value="tRNA_anti_2"/>
    <property type="match status" value="1"/>
</dbReference>
<reference key="1">
    <citation type="submission" date="2007-08" db="EMBL/GenBank/DDBJ databases">
        <title>Complete sequence of Thermotoga lettingae TMO.</title>
        <authorList>
            <consortium name="US DOE Joint Genome Institute"/>
            <person name="Copeland A."/>
            <person name="Lucas S."/>
            <person name="Lapidus A."/>
            <person name="Barry K."/>
            <person name="Glavina del Rio T."/>
            <person name="Dalin E."/>
            <person name="Tice H."/>
            <person name="Pitluck S."/>
            <person name="Foster B."/>
            <person name="Bruce D."/>
            <person name="Schmutz J."/>
            <person name="Larimer F."/>
            <person name="Land M."/>
            <person name="Hauser L."/>
            <person name="Kyrpides N."/>
            <person name="Mikhailova N."/>
            <person name="Nelson K."/>
            <person name="Gogarten J.P."/>
            <person name="Noll K."/>
            <person name="Richardson P."/>
        </authorList>
    </citation>
    <scope>NUCLEOTIDE SEQUENCE [LARGE SCALE GENOMIC DNA]</scope>
    <source>
        <strain>ATCC BAA-301 / DSM 14385 / NBRC 107922 / TMO</strain>
    </source>
</reference>
<comment type="function">
    <text evidence="1">Bidirectionally degrades single-stranded DNA into large acid-insoluble oligonucleotides, which are then degraded further into small acid-soluble oligonucleotides.</text>
</comment>
<comment type="catalytic activity">
    <reaction evidence="1">
        <text>Exonucleolytic cleavage in either 5'- to 3'- or 3'- to 5'-direction to yield nucleoside 5'-phosphates.</text>
        <dbReference type="EC" id="3.1.11.6"/>
    </reaction>
</comment>
<comment type="subunit">
    <text evidence="1">Heterooligomer composed of large and small subunits.</text>
</comment>
<comment type="subcellular location">
    <subcellularLocation>
        <location evidence="1">Cytoplasm</location>
    </subcellularLocation>
</comment>
<comment type="similarity">
    <text evidence="1">Belongs to the XseA family.</text>
</comment>
<protein>
    <recommendedName>
        <fullName evidence="1">Exodeoxyribonuclease 7 large subunit</fullName>
        <ecNumber evidence="1">3.1.11.6</ecNumber>
    </recommendedName>
    <alternativeName>
        <fullName evidence="1">Exodeoxyribonuclease VII large subunit</fullName>
        <shortName evidence="1">Exonuclease VII large subunit</shortName>
    </alternativeName>
</protein>
<name>EX7L_PSELT</name>
<proteinExistence type="inferred from homology"/>
<sequence>MDKIYTVSEVTYYIEALIDQDQYLSDIQVVGEIADLKERNGHLFFYLKDEFTTIGCVFFGGAYRSFGLSDGRIAQVAGQIKVYAPRGQYRLICRQAKILPERGTLFLRMKESYERLVAEGIFDKPKRPLPEYPSKIGLITSRNSAAYQDVLRTISDRYPLVEIFLYHTGVQGEDAKGSLLRALKDVNESDVDVVIITRGGGSRDDLWLFNDEDIVRAVYKLRHPVITGVGHQIDTVFIDLVADYSAHTPTAAAQAAVPNLSEIRMHFLELMQRMNLSIRKKIESFSQQIESSNKSLFQSMMSQILRTHSSIDSMKEKAFALMQRQMFSYEKKLSSAGTKLFSLNPVELLKKGYVIVEKDGKWVKSSSILREKDEISMRFFDGVVKVVVK</sequence>
<evidence type="ECO:0000255" key="1">
    <source>
        <dbReference type="HAMAP-Rule" id="MF_00378"/>
    </source>
</evidence>